<accession>Q9P9I8</accession>
<name>TFS_METTL</name>
<protein>
    <recommendedName>
        <fullName evidence="8">Transcription factor S</fullName>
    </recommendedName>
    <alternativeName>
        <fullName evidence="8">Transcription elongation factor IIS/RNA polymerase subunit homolog</fullName>
        <shortName evidence="8">TFIIS/RPSU homolog</shortName>
    </alternativeName>
</protein>
<gene>
    <name evidence="10" type="primary">tfs</name>
</gene>
<sequence>MVEFCPKCNNIMLPKNGRLKCTVCGFEEELGNRTEEYELKEKIEAKKQEVTVIEDVDTLPTTRIECPSCGNMEASWWLQQTRCADEPETRFYKCKKCGHTWREYD</sequence>
<proteinExistence type="inferred from homology"/>
<feature type="chain" id="PRO_0000435351" description="Transcription factor S">
    <location>
        <begin position="1"/>
        <end position="105"/>
    </location>
</feature>
<feature type="zinc finger region" description="C4-type" evidence="1">
    <location>
        <begin position="5"/>
        <end position="24"/>
    </location>
</feature>
<feature type="zinc finger region" description="TFIIS-type" evidence="3">
    <location>
        <begin position="62"/>
        <end position="102"/>
    </location>
</feature>
<feature type="binding site" evidence="4">
    <location>
        <position position="5"/>
    </location>
    <ligand>
        <name>Zn(2+)</name>
        <dbReference type="ChEBI" id="CHEBI:29105"/>
        <label>1</label>
    </ligand>
</feature>
<feature type="binding site" evidence="4">
    <location>
        <position position="8"/>
    </location>
    <ligand>
        <name>Zn(2+)</name>
        <dbReference type="ChEBI" id="CHEBI:29105"/>
        <label>1</label>
    </ligand>
</feature>
<feature type="binding site" evidence="4">
    <location>
        <position position="21"/>
    </location>
    <ligand>
        <name>Zn(2+)</name>
        <dbReference type="ChEBI" id="CHEBI:29105"/>
        <label>1</label>
    </ligand>
</feature>
<feature type="binding site" evidence="4">
    <location>
        <position position="24"/>
    </location>
    <ligand>
        <name>Zn(2+)</name>
        <dbReference type="ChEBI" id="CHEBI:29105"/>
        <label>1</label>
    </ligand>
</feature>
<feature type="binding site" evidence="3">
    <location>
        <position position="66"/>
    </location>
    <ligand>
        <name>Zn(2+)</name>
        <dbReference type="ChEBI" id="CHEBI:29105"/>
        <label>2</label>
    </ligand>
</feature>
<feature type="binding site" evidence="3">
    <location>
        <position position="69"/>
    </location>
    <ligand>
        <name>Zn(2+)</name>
        <dbReference type="ChEBI" id="CHEBI:29105"/>
        <label>2</label>
    </ligand>
</feature>
<feature type="binding site" evidence="3">
    <location>
        <position position="94"/>
    </location>
    <ligand>
        <name>Zn(2+)</name>
        <dbReference type="ChEBI" id="CHEBI:29105"/>
        <label>2</label>
    </ligand>
</feature>
<feature type="binding site" evidence="3">
    <location>
        <position position="97"/>
    </location>
    <ligand>
        <name>Zn(2+)</name>
        <dbReference type="ChEBI" id="CHEBI:29105"/>
        <label>2</label>
    </ligand>
</feature>
<dbReference type="EMBL" id="AJ271332">
    <property type="protein sequence ID" value="CAB66386.1"/>
    <property type="molecule type" value="Genomic_DNA"/>
</dbReference>
<dbReference type="SMR" id="Q9P9I8"/>
<dbReference type="GO" id="GO:0000428">
    <property type="term" value="C:DNA-directed RNA polymerase complex"/>
    <property type="evidence" value="ECO:0007669"/>
    <property type="project" value="UniProtKB-KW"/>
</dbReference>
<dbReference type="GO" id="GO:0003677">
    <property type="term" value="F:DNA binding"/>
    <property type="evidence" value="ECO:0007669"/>
    <property type="project" value="UniProtKB-KW"/>
</dbReference>
<dbReference type="GO" id="GO:0003899">
    <property type="term" value="F:DNA-directed RNA polymerase activity"/>
    <property type="evidence" value="ECO:0007669"/>
    <property type="project" value="InterPro"/>
</dbReference>
<dbReference type="GO" id="GO:0008270">
    <property type="term" value="F:zinc ion binding"/>
    <property type="evidence" value="ECO:0000250"/>
    <property type="project" value="UniProtKB"/>
</dbReference>
<dbReference type="GO" id="GO:0006351">
    <property type="term" value="P:DNA-templated transcription"/>
    <property type="evidence" value="ECO:0007669"/>
    <property type="project" value="InterPro"/>
</dbReference>
<dbReference type="GO" id="GO:0006355">
    <property type="term" value="P:regulation of DNA-templated transcription"/>
    <property type="evidence" value="ECO:0000314"/>
    <property type="project" value="UniProtKB"/>
</dbReference>
<dbReference type="CDD" id="cd10511">
    <property type="entry name" value="Zn-ribbon_TFS"/>
    <property type="match status" value="1"/>
</dbReference>
<dbReference type="FunFam" id="2.20.25.10:FF:000029">
    <property type="entry name" value="DNA-directed RNA polymerase subunit M"/>
    <property type="match status" value="1"/>
</dbReference>
<dbReference type="Gene3D" id="2.20.25.10">
    <property type="match status" value="1"/>
</dbReference>
<dbReference type="InterPro" id="IPR019761">
    <property type="entry name" value="DNA-dir_RNA_pol-M_15_CS"/>
</dbReference>
<dbReference type="InterPro" id="IPR012164">
    <property type="entry name" value="Rpa12/Rpb9/Rpc10/TFS"/>
</dbReference>
<dbReference type="InterPro" id="IPR006288">
    <property type="entry name" value="TFS"/>
</dbReference>
<dbReference type="InterPro" id="IPR001529">
    <property type="entry name" value="Zn_ribbon_RPB9"/>
</dbReference>
<dbReference type="InterPro" id="IPR001222">
    <property type="entry name" value="Znf_TFIIS"/>
</dbReference>
<dbReference type="NCBIfam" id="TIGR01384">
    <property type="entry name" value="TFS_arch"/>
    <property type="match status" value="1"/>
</dbReference>
<dbReference type="PANTHER" id="PTHR11239">
    <property type="entry name" value="DNA-DIRECTED RNA POLYMERASE"/>
    <property type="match status" value="1"/>
</dbReference>
<dbReference type="PANTHER" id="PTHR11239:SF12">
    <property type="entry name" value="DNA-DIRECTED RNA POLYMERASE III SUBUNIT RPC10"/>
    <property type="match status" value="1"/>
</dbReference>
<dbReference type="Pfam" id="PF02150">
    <property type="entry name" value="Zn_ribbon_RPB9"/>
    <property type="match status" value="1"/>
</dbReference>
<dbReference type="Pfam" id="PF01096">
    <property type="entry name" value="Zn_ribbon_TFIIS"/>
    <property type="match status" value="1"/>
</dbReference>
<dbReference type="PIRSF" id="PIRSF005586">
    <property type="entry name" value="RNApol_RpoM"/>
    <property type="match status" value="1"/>
</dbReference>
<dbReference type="SMART" id="SM00661">
    <property type="entry name" value="RPOL9"/>
    <property type="match status" value="1"/>
</dbReference>
<dbReference type="SMART" id="SM00440">
    <property type="entry name" value="ZnF_C2C2"/>
    <property type="match status" value="1"/>
</dbReference>
<dbReference type="SUPFAM" id="SSF57783">
    <property type="entry name" value="Zinc beta-ribbon"/>
    <property type="match status" value="1"/>
</dbReference>
<dbReference type="PROSITE" id="PS01030">
    <property type="entry name" value="RNA_POL_M_15KD"/>
    <property type="match status" value="1"/>
</dbReference>
<dbReference type="PROSITE" id="PS00466">
    <property type="entry name" value="ZF_TFIIS_1"/>
    <property type="match status" value="1"/>
</dbReference>
<dbReference type="PROSITE" id="PS51133">
    <property type="entry name" value="ZF_TFIIS_2"/>
    <property type="match status" value="1"/>
</dbReference>
<comment type="function">
    <text evidence="6 7">Induces RNA cleavage activity in the RNA polymerase. In its presence, the cleavage activity of the RNA polymerase truncates the RNA back to position +15 in a stepwise manner by releasing mainly dinucleotides from the 3'-end of the nascent RNA. The truncated RNAs are able to continue elongation (PubMed:10777522). Involved in transcriptional proofreading and fidelity. Misincorporation of nucleotides during elongation of transcription leads to arrested elongation complexes which are rescued by TFS-promoted removal of a dinucleotide from the 3'-end. TFS is able to induce a cleavage resynthesis cycle in stalled elongation complexes (resulting from the next missing nucleotide or a reduced incorporation rate of a wrong nucleotide) preventing misincorporation and enabling proofreading in a post-incorporation manner. Pausing of elongation complexes is the main determinant of TFS-induced RNA cleavage (PubMed:15130130).</text>
</comment>
<comment type="similarity">
    <text evidence="2 5 9">Belongs to the archaeal RpoM/eukaryotic RPA12/RPB9/RPC11 RNA polymerase family.</text>
</comment>
<comment type="caution">
    <text evidence="9">More similar by sequence similarity to the eukaryotic RNA polymerase subunits.</text>
</comment>
<reference evidence="10" key="1">
    <citation type="journal article" date="2000" name="J. Biol. Chem.">
        <title>Transcription factor S, a cleavage induction factor of the archaeal RNA polymerase.</title>
        <authorList>
            <person name="Hausner W."/>
            <person name="Lange U."/>
            <person name="Musfeldt M."/>
        </authorList>
    </citation>
    <scope>NUCLEOTIDE SEQUENCE [GENOMIC DNA]</scope>
    <scope>FUNCTION</scope>
</reference>
<reference key="2">
    <citation type="journal article" date="2004" name="Mol. Microbiol.">
        <title>Transcriptional fidelity and proofreading in Archaea and implications for the mechanism of TFS-induced RNA cleavage.</title>
        <authorList>
            <person name="Lange U."/>
            <person name="Hausner W."/>
        </authorList>
    </citation>
    <scope>FUNCTION</scope>
</reference>
<evidence type="ECO:0000250" key="1">
    <source>
        <dbReference type="UniProtKB" id="Q56254"/>
    </source>
</evidence>
<evidence type="ECO:0000255" key="2">
    <source>
        <dbReference type="PIRNR" id="PIRNR005586"/>
    </source>
</evidence>
<evidence type="ECO:0000255" key="3">
    <source>
        <dbReference type="PROSITE-ProRule" id="PRU00472"/>
    </source>
</evidence>
<evidence type="ECO:0000255" key="4">
    <source>
        <dbReference type="PROSITE-ProRule" id="PRU10145"/>
    </source>
</evidence>
<evidence type="ECO:0000255" key="5">
    <source>
        <dbReference type="RuleBase" id="RU003474"/>
    </source>
</evidence>
<evidence type="ECO:0000269" key="6">
    <source>
    </source>
</evidence>
<evidence type="ECO:0000269" key="7">
    <source>
    </source>
</evidence>
<evidence type="ECO:0000303" key="8">
    <source>
    </source>
</evidence>
<evidence type="ECO:0000305" key="9"/>
<evidence type="ECO:0000312" key="10">
    <source>
        <dbReference type="EMBL" id="CAB66386.1"/>
    </source>
</evidence>
<keyword id="KW-0238">DNA-binding</keyword>
<keyword id="KW-0240">DNA-directed RNA polymerase</keyword>
<keyword id="KW-0479">Metal-binding</keyword>
<keyword id="KW-0804">Transcription</keyword>
<keyword id="KW-0805">Transcription regulation</keyword>
<keyword id="KW-0862">Zinc</keyword>
<keyword id="KW-0863">Zinc-finger</keyword>
<organism evidence="10">
    <name type="scientific">Methanothermococcus thermolithotrophicus</name>
    <name type="common">Methanococcus thermolithotrophicus</name>
    <dbReference type="NCBI Taxonomy" id="2186"/>
    <lineage>
        <taxon>Archaea</taxon>
        <taxon>Methanobacteriati</taxon>
        <taxon>Methanobacteriota</taxon>
        <taxon>Methanomada group</taxon>
        <taxon>Methanococci</taxon>
        <taxon>Methanococcales</taxon>
        <taxon>Methanococcaceae</taxon>
        <taxon>Methanothermococcus</taxon>
    </lineage>
</organism>